<name>PKND_PARUW</name>
<comment type="function">
    <text evidence="1">Together with the serine/threonine kinase Pkn1, may play a role in the specific interactions with host proteins during intracellular growth.</text>
</comment>
<comment type="catalytic activity">
    <reaction evidence="1">
        <text>L-seryl-[protein] + ATP = O-phospho-L-seryl-[protein] + ADP + H(+)</text>
        <dbReference type="Rhea" id="RHEA:17989"/>
        <dbReference type="Rhea" id="RHEA-COMP:9863"/>
        <dbReference type="Rhea" id="RHEA-COMP:11604"/>
        <dbReference type="ChEBI" id="CHEBI:15378"/>
        <dbReference type="ChEBI" id="CHEBI:29999"/>
        <dbReference type="ChEBI" id="CHEBI:30616"/>
        <dbReference type="ChEBI" id="CHEBI:83421"/>
        <dbReference type="ChEBI" id="CHEBI:456216"/>
        <dbReference type="EC" id="2.7.11.1"/>
    </reaction>
</comment>
<comment type="catalytic activity">
    <reaction evidence="1">
        <text>L-threonyl-[protein] + ATP = O-phospho-L-threonyl-[protein] + ADP + H(+)</text>
        <dbReference type="Rhea" id="RHEA:46608"/>
        <dbReference type="Rhea" id="RHEA-COMP:11060"/>
        <dbReference type="Rhea" id="RHEA-COMP:11605"/>
        <dbReference type="ChEBI" id="CHEBI:15378"/>
        <dbReference type="ChEBI" id="CHEBI:30013"/>
        <dbReference type="ChEBI" id="CHEBI:30616"/>
        <dbReference type="ChEBI" id="CHEBI:61977"/>
        <dbReference type="ChEBI" id="CHEBI:456216"/>
        <dbReference type="EC" id="2.7.11.1"/>
    </reaction>
</comment>
<comment type="PTM">
    <text evidence="1">Autophosphorylated on serine and threonine residues.</text>
</comment>
<comment type="similarity">
    <text evidence="1">Belongs to the protein kinase superfamily. Ser/Thr protein kinase family.</text>
</comment>
<protein>
    <recommendedName>
        <fullName evidence="1">Serine/threonine-protein kinase PknD</fullName>
        <ecNumber evidence="1">2.7.11.1</ecNumber>
    </recommendedName>
</protein>
<accession>Q6MAN0</accession>
<gene>
    <name evidence="1" type="primary">pknD</name>
    <name type="ordered locus">pc1645</name>
</gene>
<dbReference type="EC" id="2.7.11.1" evidence="1"/>
<dbReference type="EMBL" id="BX908798">
    <property type="protein sequence ID" value="CAF24369.1"/>
    <property type="molecule type" value="Genomic_DNA"/>
</dbReference>
<dbReference type="RefSeq" id="WP_011176191.1">
    <property type="nucleotide sequence ID" value="NC_005861.2"/>
</dbReference>
<dbReference type="SMR" id="Q6MAN0"/>
<dbReference type="STRING" id="264201.pc1645"/>
<dbReference type="KEGG" id="pcu:PC_RS07875"/>
<dbReference type="eggNOG" id="COG0457">
    <property type="taxonomic scope" value="Bacteria"/>
</dbReference>
<dbReference type="eggNOG" id="COG0515">
    <property type="taxonomic scope" value="Bacteria"/>
</dbReference>
<dbReference type="HOGENOM" id="CLU_303227_0_0_0"/>
<dbReference type="OrthoDB" id="9788659at2"/>
<dbReference type="Proteomes" id="UP000000529">
    <property type="component" value="Chromosome"/>
</dbReference>
<dbReference type="GO" id="GO:0005524">
    <property type="term" value="F:ATP binding"/>
    <property type="evidence" value="ECO:0007669"/>
    <property type="project" value="UniProtKB-KW"/>
</dbReference>
<dbReference type="GO" id="GO:0106310">
    <property type="term" value="F:protein serine kinase activity"/>
    <property type="evidence" value="ECO:0007669"/>
    <property type="project" value="RHEA"/>
</dbReference>
<dbReference type="GO" id="GO:0004674">
    <property type="term" value="F:protein serine/threonine kinase activity"/>
    <property type="evidence" value="ECO:0007669"/>
    <property type="project" value="UniProtKB-UniRule"/>
</dbReference>
<dbReference type="CDD" id="cd14014">
    <property type="entry name" value="STKc_PknB_like"/>
    <property type="match status" value="1"/>
</dbReference>
<dbReference type="Gene3D" id="2.60.120.560">
    <property type="entry name" value="Exo-inulinase, domain 1"/>
    <property type="match status" value="1"/>
</dbReference>
<dbReference type="Gene3D" id="3.30.200.20">
    <property type="entry name" value="Phosphorylase Kinase, domain 1"/>
    <property type="match status" value="1"/>
</dbReference>
<dbReference type="Gene3D" id="1.25.40.10">
    <property type="entry name" value="Tetratricopeptide repeat domain"/>
    <property type="match status" value="1"/>
</dbReference>
<dbReference type="Gene3D" id="1.10.510.10">
    <property type="entry name" value="Transferase(Phosphotransferase) domain 1"/>
    <property type="match status" value="1"/>
</dbReference>
<dbReference type="HAMAP" id="MF_01957">
    <property type="entry name" value="PknD_kinase"/>
    <property type="match status" value="1"/>
</dbReference>
<dbReference type="InterPro" id="IPR011009">
    <property type="entry name" value="Kinase-like_dom_sf"/>
</dbReference>
<dbReference type="InterPro" id="IPR000719">
    <property type="entry name" value="Prot_kinase_dom"/>
</dbReference>
<dbReference type="InterPro" id="IPR017441">
    <property type="entry name" value="Protein_kinase_ATP_BS"/>
</dbReference>
<dbReference type="InterPro" id="IPR008271">
    <property type="entry name" value="Ser/Thr_kinase_AS"/>
</dbReference>
<dbReference type="InterPro" id="IPR023507">
    <property type="entry name" value="Ser/Thr_kinase_PknD"/>
</dbReference>
<dbReference type="InterPro" id="IPR011990">
    <property type="entry name" value="TPR-like_helical_dom_sf"/>
</dbReference>
<dbReference type="NCBIfam" id="NF009651">
    <property type="entry name" value="PRK13184.1"/>
    <property type="match status" value="1"/>
</dbReference>
<dbReference type="PANTHER" id="PTHR43289">
    <property type="entry name" value="MITOGEN-ACTIVATED PROTEIN KINASE KINASE KINASE 20-RELATED"/>
    <property type="match status" value="1"/>
</dbReference>
<dbReference type="PANTHER" id="PTHR43289:SF34">
    <property type="entry name" value="SERINE_THREONINE-PROTEIN KINASE YBDM-RELATED"/>
    <property type="match status" value="1"/>
</dbReference>
<dbReference type="Pfam" id="PF00069">
    <property type="entry name" value="Pkinase"/>
    <property type="match status" value="1"/>
</dbReference>
<dbReference type="SMART" id="SM00220">
    <property type="entry name" value="S_TKc"/>
    <property type="match status" value="1"/>
</dbReference>
<dbReference type="SUPFAM" id="SSF56112">
    <property type="entry name" value="Protein kinase-like (PK-like)"/>
    <property type="match status" value="1"/>
</dbReference>
<dbReference type="SUPFAM" id="SSF48452">
    <property type="entry name" value="TPR-like"/>
    <property type="match status" value="1"/>
</dbReference>
<dbReference type="PROSITE" id="PS00107">
    <property type="entry name" value="PROTEIN_KINASE_ATP"/>
    <property type="match status" value="1"/>
</dbReference>
<dbReference type="PROSITE" id="PS50011">
    <property type="entry name" value="PROTEIN_KINASE_DOM"/>
    <property type="match status" value="1"/>
</dbReference>
<dbReference type="PROSITE" id="PS00108">
    <property type="entry name" value="PROTEIN_KINASE_ST"/>
    <property type="match status" value="1"/>
</dbReference>
<evidence type="ECO:0000255" key="1">
    <source>
        <dbReference type="HAMAP-Rule" id="MF_01957"/>
    </source>
</evidence>
<organism>
    <name type="scientific">Protochlamydia amoebophila (strain UWE25)</name>
    <dbReference type="NCBI Taxonomy" id="264201"/>
    <lineage>
        <taxon>Bacteria</taxon>
        <taxon>Pseudomonadati</taxon>
        <taxon>Chlamydiota</taxon>
        <taxon>Chlamydiia</taxon>
        <taxon>Parachlamydiales</taxon>
        <taxon>Parachlamydiaceae</taxon>
        <taxon>Candidatus Protochlamydia</taxon>
    </lineage>
</organism>
<proteinExistence type="inferred from homology"/>
<reference key="1">
    <citation type="journal article" date="2004" name="Science">
        <title>Illuminating the evolutionary history of chlamydiae.</title>
        <authorList>
            <person name="Horn M."/>
            <person name="Collingro A."/>
            <person name="Schmitz-Esser S."/>
            <person name="Beier C.L."/>
            <person name="Purkhold U."/>
            <person name="Fartmann B."/>
            <person name="Brandt P."/>
            <person name="Nyakatura G.J."/>
            <person name="Droege M."/>
            <person name="Frishman D."/>
            <person name="Rattei T."/>
            <person name="Mewes H.-W."/>
            <person name="Wagner M."/>
        </authorList>
    </citation>
    <scope>NUCLEOTIDE SEQUENCE [LARGE SCALE GENOMIC DNA]</scope>
    <source>
        <strain>UWE25</strain>
    </source>
</reference>
<feature type="chain" id="PRO_0000239302" description="Serine/threonine-protein kinase PknD">
    <location>
        <begin position="1"/>
        <end position="982"/>
    </location>
</feature>
<feature type="domain" description="Protein kinase" evidence="1">
    <location>
        <begin position="51"/>
        <end position="342"/>
    </location>
</feature>
<feature type="active site" description="Proton acceptor" evidence="1">
    <location>
        <position position="186"/>
    </location>
</feature>
<feature type="binding site" evidence="1">
    <location>
        <begin position="57"/>
        <end position="65"/>
    </location>
    <ligand>
        <name>ATP</name>
        <dbReference type="ChEBI" id="CHEBI:30616"/>
    </ligand>
</feature>
<feature type="binding site" evidence="1">
    <location>
        <position position="80"/>
    </location>
    <ligand>
        <name>ATP</name>
        <dbReference type="ChEBI" id="CHEBI:30616"/>
    </ligand>
</feature>
<sequence length="982" mass="113378">MPHSFPDYSFTCPFCKNNCKLSFAQCPAFCPFCGKSQKNESTGLPIQSDFYQIIKSIGKGGMGEVFLAYDPCYERQIAIKKIRSDLLEHPQIKKRFLKEAHMTSQLTHPAIIPIYTIRSDADTAYYTMPFVEGDTLKQIIRKTKLQEKNGETLDYLGGSILALMRVFITICQAVAYAHSKGVLHRDLKPENIIIGKYGEVLILDWGLAKFIDQSPEEELLASFPESLTKQKDITKIGKVVGTVAYMAPERALGQPATIQTDIYSLGVILYQLLTLKSPFKRGTLDEFRKNMSREEWQDPVTAAPYREVPRMLASFTEKCLSLDLQNRYQSVEELIRDIENYLEGRSEWFCIANLNTKEKNDWEFQENVLIAEHVAITRMTDDAEWVSLMISKQSFTGNTKIEADVCLGEQGHGIGFLLSVPEASAREHLIEGYCLWLGSDFSKTTKLLRSNVEVVHAPDIFLKRQQTYHVRIEKVDKSIHVYINDNLQFSYIAHIPLIGTHVGLLSRDADFEISPLEIYVGNLNINVNCLAVPDAFLAHRDYNQALSEYRRIAYSFPDRTEGREALFRAGLTFLEQAKTAENKMPLLEEALNEFEKLHGTPSAPLEYLGKALAYESINDSEEEIKCYELAYRRYPNHPILPMLQEQIISRLHEVSRMQRITTYRFTLLTVRHLPLNKIDTHTKRLFNSLQKHWEVLPFIEYKSPSPLTTLSTRFATPLAFWLAKPFILGEILDDLIQSPPFPIEEVNNALLCLVELGSWEYAQEKLNTIQTYLNLPQNPKWLDLKAFIACHYQTLEDVYKDFFFQIPSTNADHLHAVLYFMDQCLDQLNTSLIYTLARQFEHAELSFEDRLRLNCRRVWAYLLDKNWQDAGNLLYTYSVETLNKDSSLLHFLYGCWLQVTEGAEIANVHFAGVNPVMFPRTWTLGARFLTNNLSKDSYEKAFMWEKRQLCKQLILYYHCVGNETKRIHFQKLYQEQFIHAEL</sequence>
<keyword id="KW-0067">ATP-binding</keyword>
<keyword id="KW-0418">Kinase</keyword>
<keyword id="KW-0547">Nucleotide-binding</keyword>
<keyword id="KW-0597">Phosphoprotein</keyword>
<keyword id="KW-1185">Reference proteome</keyword>
<keyword id="KW-0723">Serine/threonine-protein kinase</keyword>
<keyword id="KW-0808">Transferase</keyword>